<proteinExistence type="evidence at transcript level"/>
<keyword id="KW-0067">ATP-binding</keyword>
<keyword id="KW-0347">Helicase</keyword>
<keyword id="KW-0378">Hydrolase</keyword>
<keyword id="KW-0496">Mitochondrion</keyword>
<keyword id="KW-1135">Mitochondrion nucleoid</keyword>
<keyword id="KW-0547">Nucleotide-binding</keyword>
<keyword id="KW-0539">Nucleus</keyword>
<keyword id="KW-1185">Reference proteome</keyword>
<keyword id="KW-0809">Transit peptide</keyword>
<name>SUV3_DANRE</name>
<evidence type="ECO:0000250" key="1"/>
<evidence type="ECO:0000255" key="2"/>
<evidence type="ECO:0000255" key="3">
    <source>
        <dbReference type="PROSITE-ProRule" id="PRU00541"/>
    </source>
</evidence>
<evidence type="ECO:0000255" key="4">
    <source>
        <dbReference type="PROSITE-ProRule" id="PRU00542"/>
    </source>
</evidence>
<evidence type="ECO:0000256" key="5">
    <source>
        <dbReference type="SAM" id="MobiDB-lite"/>
    </source>
</evidence>
<evidence type="ECO:0000305" key="6"/>
<gene>
    <name type="primary">supv3l1</name>
</gene>
<sequence length="763" mass="86255">MSVNRCIYLLSRSHIRYRVCASTNLSTVSTLSTTQHSTRRTFDKLSTRHSSSGSSRPLDTSLFIPLPVKTDEDAEGSVGAELTKPLDKNELLKVLNRFYKRKEMQKLASDQGLDARLFHQAFVSFRKYVLEMNSLNADLHIILNDICCGAGHIDDIFPYFMRHAKQIFPMLDCIDDLRKISDLRVPANWYPEARAIQRKIVFHAGPTNSGKTYHAIKRYLEAKSGVYCGPLKLLAHEIYEKSNAAGVPCDLVTGEERIFVDPEGKPSGHIASTIEMCSVTTPYEVAVIDEIQMIKDPARGWAWTRALLGLCAEEIHVCGEAAAVDFITELMFTTGEEVEVHNYKRLTPFSISNHAVESLDNLKPGDCIVCFSKNDIYSISRQIEIRGLECAVIYGSLPPGTKLAQAKKFNDPDDPCKILVATDAIGMGLNLSIRRIIFNSLVKHSLNEKGEKEVDTISTSQALQIAGRAGRFSSVFKEGEVTTMHRDDLPVLKEILGKPVDPIATAGLHPTAEQIEMFAYHLPQATLSNLIDIFVSLSQVDGLYFVCNIDDFKFLADMIQHIPLNLRSRYVFCTAPINKKQPFVCTSFLKFARQFSRDEPLTFNWVCRQVNWPLSPPKNIKDLVHLEAVHDVLDLYLWLSYRFMDMFPDSNQIREIQKELDENIQIGVRNITRLIRAIDSQPTDTESNSSSTVPESETSQRKGRVLRSQNQRKELPRKSSLSSRLLRDGLLTKELLSQLQKEWAREQNEDNSIPVNNGKRKKK</sequence>
<reference key="1">
    <citation type="submission" date="2007-03" db="EMBL/GenBank/DDBJ databases">
        <authorList>
            <consortium name="NIH - Zebrafish Gene Collection (ZGC) project"/>
        </authorList>
    </citation>
    <scope>NUCLEOTIDE SEQUENCE [LARGE SCALE MRNA]</scope>
    <source>
        <tissue>Ovary</tissue>
    </source>
</reference>
<feature type="transit peptide" description="Mitochondrion" evidence="2">
    <location>
        <begin position="1"/>
        <end position="65"/>
    </location>
</feature>
<feature type="chain" id="PRO_0000310549" description="ATP-dependent RNA helicase SUPV3L1, mitochondrial">
    <location>
        <begin position="66"/>
        <end position="763"/>
    </location>
</feature>
<feature type="domain" description="Helicase ATP-binding" evidence="3">
    <location>
        <begin position="192"/>
        <end position="332"/>
    </location>
</feature>
<feature type="domain" description="Helicase C-terminal" evidence="4">
    <location>
        <begin position="354"/>
        <end position="519"/>
    </location>
</feature>
<feature type="region of interest" description="Disordered" evidence="5">
    <location>
        <begin position="39"/>
        <end position="58"/>
    </location>
</feature>
<feature type="region of interest" description="Disordered" evidence="5">
    <location>
        <begin position="679"/>
        <end position="721"/>
    </location>
</feature>
<feature type="region of interest" description="Disordered" evidence="5">
    <location>
        <begin position="742"/>
        <end position="763"/>
    </location>
</feature>
<feature type="compositionally biased region" description="Polar residues" evidence="5">
    <location>
        <begin position="680"/>
        <end position="697"/>
    </location>
</feature>
<feature type="binding site" evidence="3">
    <location>
        <begin position="205"/>
        <end position="212"/>
    </location>
    <ligand>
        <name>ATP</name>
        <dbReference type="ChEBI" id="CHEBI:30616"/>
    </ligand>
</feature>
<accession>A4IG62</accession>
<comment type="function">
    <text evidence="1">Major helicase player in mitochondrial RNA metabolism. Component of the mitochondrial degradosome (mtEXO) complex, that degrades 3' overhang double-stranded RNA with a 3'-to-5' directionality in an ATP-dependent manner. ATPase and ATP-dependent multisubstrate helicase, able to unwind double-stranded (ds) DNA and RNA, and RNA/DNA heteroduplexes in the 5'-to-3' direction. Plays a role in the RNA surveillance system in mitochondria; regulates the stability of mature mRNAs, the removal of aberrantly formed mRNAs and the rapid degradation of non coding processing intermediates. Also implicated in recombination and chromatin maintenance pathways. May protect cells from apoptosis. Associates with mitochondrial DNA (By similarity).</text>
</comment>
<comment type="catalytic activity">
    <reaction>
        <text>ATP + H2O = ADP + phosphate + H(+)</text>
        <dbReference type="Rhea" id="RHEA:13065"/>
        <dbReference type="ChEBI" id="CHEBI:15377"/>
        <dbReference type="ChEBI" id="CHEBI:15378"/>
        <dbReference type="ChEBI" id="CHEBI:30616"/>
        <dbReference type="ChEBI" id="CHEBI:43474"/>
        <dbReference type="ChEBI" id="CHEBI:456216"/>
        <dbReference type="EC" id="3.6.4.13"/>
    </reaction>
</comment>
<comment type="cofactor">
    <cofactor evidence="1">
        <name>Mg(2+)</name>
        <dbReference type="ChEBI" id="CHEBI:18420"/>
    </cofactor>
    <cofactor evidence="1">
        <name>Mn(2+)</name>
        <dbReference type="ChEBI" id="CHEBI:29035"/>
    </cofactor>
</comment>
<comment type="subcellular location">
    <subcellularLocation>
        <location evidence="1">Nucleus</location>
    </subcellularLocation>
    <subcellularLocation>
        <location evidence="1">Mitochondrion matrix</location>
    </subcellularLocation>
    <subcellularLocation>
        <location evidence="1">Mitochondrion matrix</location>
        <location evidence="1">Mitochondrion nucleoid</location>
    </subcellularLocation>
</comment>
<comment type="similarity">
    <text evidence="6">Belongs to the helicase family.</text>
</comment>
<dbReference type="EC" id="3.6.4.13"/>
<dbReference type="EMBL" id="BC134945">
    <property type="protein sequence ID" value="AAI34946.1"/>
    <property type="molecule type" value="mRNA"/>
</dbReference>
<dbReference type="RefSeq" id="NP_001077033.1">
    <property type="nucleotide sequence ID" value="NM_001083564.1"/>
</dbReference>
<dbReference type="SMR" id="A4IG62"/>
<dbReference type="FunCoup" id="A4IG62">
    <property type="interactions" value="1931"/>
</dbReference>
<dbReference type="STRING" id="7955.ENSDARP00000099447"/>
<dbReference type="PaxDb" id="7955-ENSDARP00000099447"/>
<dbReference type="PeptideAtlas" id="A4IG62"/>
<dbReference type="Ensembl" id="ENSDART00000189730">
    <property type="protein sequence ID" value="ENSDARP00000147822"/>
    <property type="gene ID" value="ENSDARG00000111098"/>
</dbReference>
<dbReference type="GeneID" id="570852"/>
<dbReference type="KEGG" id="dre:570852"/>
<dbReference type="AGR" id="ZFIN:ZDB-GENE-030131-2838"/>
<dbReference type="CTD" id="6832"/>
<dbReference type="ZFIN" id="ZDB-GENE-030131-2838">
    <property type="gene designation" value="supv3l1"/>
</dbReference>
<dbReference type="eggNOG" id="KOG0953">
    <property type="taxonomic scope" value="Eukaryota"/>
</dbReference>
<dbReference type="InParanoid" id="A4IG62"/>
<dbReference type="OMA" id="QPANWYT"/>
<dbReference type="OrthoDB" id="6692397at2759"/>
<dbReference type="PRO" id="PR:A4IG62"/>
<dbReference type="Proteomes" id="UP000000437">
    <property type="component" value="Alternate scaffold 13"/>
</dbReference>
<dbReference type="Proteomes" id="UP000000437">
    <property type="component" value="Chromosome 13"/>
</dbReference>
<dbReference type="GO" id="GO:0045025">
    <property type="term" value="C:mitochondrial degradosome"/>
    <property type="evidence" value="ECO:0000250"/>
    <property type="project" value="UniProtKB"/>
</dbReference>
<dbReference type="GO" id="GO:0005759">
    <property type="term" value="C:mitochondrial matrix"/>
    <property type="evidence" value="ECO:0000250"/>
    <property type="project" value="UniProtKB"/>
</dbReference>
<dbReference type="GO" id="GO:0042645">
    <property type="term" value="C:mitochondrial nucleoid"/>
    <property type="evidence" value="ECO:0007669"/>
    <property type="project" value="UniProtKB-SubCell"/>
</dbReference>
<dbReference type="GO" id="GO:0005739">
    <property type="term" value="C:mitochondrion"/>
    <property type="evidence" value="ECO:0000250"/>
    <property type="project" value="UniProtKB"/>
</dbReference>
<dbReference type="GO" id="GO:0005634">
    <property type="term" value="C:nucleus"/>
    <property type="evidence" value="ECO:0000250"/>
    <property type="project" value="UniProtKB"/>
</dbReference>
<dbReference type="GO" id="GO:0034458">
    <property type="term" value="F:3'-5' RNA helicase activity"/>
    <property type="evidence" value="ECO:0000250"/>
    <property type="project" value="UniProtKB"/>
</dbReference>
<dbReference type="GO" id="GO:0005524">
    <property type="term" value="F:ATP binding"/>
    <property type="evidence" value="ECO:0007669"/>
    <property type="project" value="UniProtKB-KW"/>
</dbReference>
<dbReference type="GO" id="GO:0016887">
    <property type="term" value="F:ATP hydrolysis activity"/>
    <property type="evidence" value="ECO:0007669"/>
    <property type="project" value="RHEA"/>
</dbReference>
<dbReference type="GO" id="GO:0003677">
    <property type="term" value="F:DNA binding"/>
    <property type="evidence" value="ECO:0000250"/>
    <property type="project" value="UniProtKB"/>
</dbReference>
<dbReference type="GO" id="GO:0003678">
    <property type="term" value="F:DNA helicase activity"/>
    <property type="evidence" value="ECO:0000250"/>
    <property type="project" value="UniProtKB"/>
</dbReference>
<dbReference type="GO" id="GO:0003725">
    <property type="term" value="F:double-stranded RNA binding"/>
    <property type="evidence" value="ECO:0000250"/>
    <property type="project" value="UniProtKB"/>
</dbReference>
<dbReference type="GO" id="GO:0003724">
    <property type="term" value="F:RNA helicase activity"/>
    <property type="evidence" value="ECO:0000250"/>
    <property type="project" value="UniProtKB"/>
</dbReference>
<dbReference type="GO" id="GO:0006310">
    <property type="term" value="P:DNA recombination"/>
    <property type="evidence" value="ECO:0000250"/>
    <property type="project" value="UniProtKB"/>
</dbReference>
<dbReference type="GO" id="GO:0001889">
    <property type="term" value="P:liver development"/>
    <property type="evidence" value="ECO:0000315"/>
    <property type="project" value="ZFIN"/>
</dbReference>
<dbReference type="GO" id="GO:0000958">
    <property type="term" value="P:mitochondrial mRNA catabolic process"/>
    <property type="evidence" value="ECO:0000250"/>
    <property type="project" value="UniProtKB"/>
</dbReference>
<dbReference type="GO" id="GO:0035946">
    <property type="term" value="P:mitochondrial mRNA surveillance"/>
    <property type="evidence" value="ECO:0000250"/>
    <property type="project" value="UniProtKB"/>
</dbReference>
<dbReference type="GO" id="GO:0035945">
    <property type="term" value="P:mitochondrial ncRNA surveillance"/>
    <property type="evidence" value="ECO:0000250"/>
    <property type="project" value="UniProtKB"/>
</dbReference>
<dbReference type="GO" id="GO:0000965">
    <property type="term" value="P:mitochondrial RNA 3'-end processing"/>
    <property type="evidence" value="ECO:0000250"/>
    <property type="project" value="UniProtKB"/>
</dbReference>
<dbReference type="GO" id="GO:2000827">
    <property type="term" value="P:mitochondrial RNA surveillance"/>
    <property type="evidence" value="ECO:0000250"/>
    <property type="project" value="UniProtKB"/>
</dbReference>
<dbReference type="GO" id="GO:0007005">
    <property type="term" value="P:mitochondrion organization"/>
    <property type="evidence" value="ECO:0000250"/>
    <property type="project" value="UniProtKB"/>
</dbReference>
<dbReference type="GO" id="GO:0043066">
    <property type="term" value="P:negative regulation of apoptotic process"/>
    <property type="evidence" value="ECO:0000250"/>
    <property type="project" value="UniProtKB"/>
</dbReference>
<dbReference type="GO" id="GO:0030307">
    <property type="term" value="P:positive regulation of cell growth"/>
    <property type="evidence" value="ECO:0000250"/>
    <property type="project" value="UniProtKB"/>
</dbReference>
<dbReference type="GO" id="GO:0000962">
    <property type="term" value="P:positive regulation of mitochondrial RNA catabolic process"/>
    <property type="evidence" value="ECO:0000250"/>
    <property type="project" value="UniProtKB"/>
</dbReference>
<dbReference type="GO" id="GO:0006401">
    <property type="term" value="P:RNA catabolic process"/>
    <property type="evidence" value="ECO:0000250"/>
    <property type="project" value="UniProtKB"/>
</dbReference>
<dbReference type="CDD" id="cd17913">
    <property type="entry name" value="DEXQc_Suv3"/>
    <property type="match status" value="1"/>
</dbReference>
<dbReference type="CDD" id="cd18805">
    <property type="entry name" value="SF2_C_suv3"/>
    <property type="match status" value="1"/>
</dbReference>
<dbReference type="FunFam" id="1.10.1740.140:FF:000001">
    <property type="entry name" value="ATP-dependent RNA helicase SUPV3L1, mitochondrial"/>
    <property type="match status" value="1"/>
</dbReference>
<dbReference type="FunFam" id="1.20.58.1080:FF:000001">
    <property type="entry name" value="ATP-dependent RNA helicase SUPV3L1, mitochondrial"/>
    <property type="match status" value="1"/>
</dbReference>
<dbReference type="FunFam" id="3.40.50.300:FF:000269">
    <property type="entry name" value="ATP-dependent RNA helicase SUPV3L1, mitochondrial"/>
    <property type="match status" value="1"/>
</dbReference>
<dbReference type="FunFam" id="3.40.50.300:FF:000446">
    <property type="entry name" value="ATP-dependent RNA helicase SUPV3L1, mitochondrial"/>
    <property type="match status" value="1"/>
</dbReference>
<dbReference type="Gene3D" id="1.10.1740.140">
    <property type="match status" value="1"/>
</dbReference>
<dbReference type="Gene3D" id="1.20.272.40">
    <property type="match status" value="1"/>
</dbReference>
<dbReference type="Gene3D" id="1.20.58.1080">
    <property type="match status" value="1"/>
</dbReference>
<dbReference type="Gene3D" id="3.40.50.300">
    <property type="entry name" value="P-loop containing nucleotide triphosphate hydrolases"/>
    <property type="match status" value="2"/>
</dbReference>
<dbReference type="InterPro" id="IPR055206">
    <property type="entry name" value="DEXQc_SUV3"/>
</dbReference>
<dbReference type="InterPro" id="IPR001650">
    <property type="entry name" value="Helicase_C-like"/>
</dbReference>
<dbReference type="InterPro" id="IPR027417">
    <property type="entry name" value="P-loop_NTPase"/>
</dbReference>
<dbReference type="InterPro" id="IPR050699">
    <property type="entry name" value="RNA-DNA_Helicase"/>
</dbReference>
<dbReference type="InterPro" id="IPR022192">
    <property type="entry name" value="SUV3_C"/>
</dbReference>
<dbReference type="InterPro" id="IPR041082">
    <property type="entry name" value="Suv3_C_1"/>
</dbReference>
<dbReference type="InterPro" id="IPR044774">
    <property type="entry name" value="Suv3_DEXQc"/>
</dbReference>
<dbReference type="InterPro" id="IPR041453">
    <property type="entry name" value="Suv3_N"/>
</dbReference>
<dbReference type="PANTHER" id="PTHR12131">
    <property type="entry name" value="ATP-DEPENDENT RNA AND DNA HELICASE"/>
    <property type="match status" value="1"/>
</dbReference>
<dbReference type="PANTHER" id="PTHR12131:SF1">
    <property type="entry name" value="ATP-DEPENDENT RNA HELICASE SUPV3L1, MITOCHONDRIAL-RELATED"/>
    <property type="match status" value="1"/>
</dbReference>
<dbReference type="Pfam" id="PF22527">
    <property type="entry name" value="DEXQc_Suv3"/>
    <property type="match status" value="1"/>
</dbReference>
<dbReference type="Pfam" id="PF00271">
    <property type="entry name" value="Helicase_C"/>
    <property type="match status" value="1"/>
</dbReference>
<dbReference type="Pfam" id="PF12513">
    <property type="entry name" value="SUV3_C"/>
    <property type="match status" value="1"/>
</dbReference>
<dbReference type="Pfam" id="PF18147">
    <property type="entry name" value="Suv3_C_1"/>
    <property type="match status" value="1"/>
</dbReference>
<dbReference type="Pfam" id="PF18114">
    <property type="entry name" value="Suv3_N"/>
    <property type="match status" value="1"/>
</dbReference>
<dbReference type="SMART" id="SM00490">
    <property type="entry name" value="HELICc"/>
    <property type="match status" value="1"/>
</dbReference>
<dbReference type="SUPFAM" id="SSF52540">
    <property type="entry name" value="P-loop containing nucleoside triphosphate hydrolases"/>
    <property type="match status" value="2"/>
</dbReference>
<dbReference type="PROSITE" id="PS51192">
    <property type="entry name" value="HELICASE_ATP_BIND_1"/>
    <property type="match status" value="1"/>
</dbReference>
<dbReference type="PROSITE" id="PS51194">
    <property type="entry name" value="HELICASE_CTER"/>
    <property type="match status" value="1"/>
</dbReference>
<protein>
    <recommendedName>
        <fullName>ATP-dependent RNA helicase SUPV3L1, mitochondrial</fullName>
        <ecNumber>3.6.4.13</ecNumber>
    </recommendedName>
    <alternativeName>
        <fullName>Suppressor of var1 3-like protein 1</fullName>
        <shortName>SUV3-like protein 1</shortName>
    </alternativeName>
</protein>
<organism>
    <name type="scientific">Danio rerio</name>
    <name type="common">Zebrafish</name>
    <name type="synonym">Brachydanio rerio</name>
    <dbReference type="NCBI Taxonomy" id="7955"/>
    <lineage>
        <taxon>Eukaryota</taxon>
        <taxon>Metazoa</taxon>
        <taxon>Chordata</taxon>
        <taxon>Craniata</taxon>
        <taxon>Vertebrata</taxon>
        <taxon>Euteleostomi</taxon>
        <taxon>Actinopterygii</taxon>
        <taxon>Neopterygii</taxon>
        <taxon>Teleostei</taxon>
        <taxon>Ostariophysi</taxon>
        <taxon>Cypriniformes</taxon>
        <taxon>Danionidae</taxon>
        <taxon>Danioninae</taxon>
        <taxon>Danio</taxon>
    </lineage>
</organism>